<dbReference type="EMBL" id="M86737">
    <property type="protein sequence ID" value="AAA58660.1"/>
    <property type="molecule type" value="mRNA"/>
</dbReference>
<dbReference type="EMBL" id="BC005116">
    <property type="protein sequence ID" value="AAH05116.1"/>
    <property type="molecule type" value="mRNA"/>
</dbReference>
<dbReference type="EMBL" id="BC091486">
    <property type="protein sequence ID" value="AAH91486.1"/>
    <property type="status" value="ALT_SEQ"/>
    <property type="molecule type" value="mRNA"/>
</dbReference>
<dbReference type="CCDS" id="CCDS7952.1"/>
<dbReference type="PIR" id="A41976">
    <property type="entry name" value="A41976"/>
</dbReference>
<dbReference type="RefSeq" id="NP_003137.1">
    <property type="nucleotide sequence ID" value="NM_003146.3"/>
</dbReference>
<dbReference type="RefSeq" id="XP_047283454.1">
    <property type="nucleotide sequence ID" value="XM_047427498.1"/>
</dbReference>
<dbReference type="RefSeq" id="XP_054225732.1">
    <property type="nucleotide sequence ID" value="XM_054369757.1"/>
</dbReference>
<dbReference type="PDB" id="4IFS">
    <property type="method" value="X-ray"/>
    <property type="resolution" value="1.93 A"/>
    <property type="chains" value="A=196-430"/>
</dbReference>
<dbReference type="PDB" id="5UMR">
    <property type="method" value="X-ray"/>
    <property type="resolution" value="1.50 A"/>
    <property type="chains" value="A=1-100"/>
</dbReference>
<dbReference type="PDB" id="5UMS">
    <property type="method" value="X-ray"/>
    <property type="resolution" value="1.57 A"/>
    <property type="chains" value="A=174-437"/>
</dbReference>
<dbReference type="PDB" id="5VWE">
    <property type="method" value="NMR"/>
    <property type="chains" value="A=551-617"/>
</dbReference>
<dbReference type="PDB" id="6L1E">
    <property type="method" value="X-ray"/>
    <property type="resolution" value="2.09 A"/>
    <property type="chains" value="A=196-430"/>
</dbReference>
<dbReference type="PDB" id="6L1R">
    <property type="method" value="X-ray"/>
    <property type="resolution" value="1.80 A"/>
    <property type="chains" value="A=1-100"/>
</dbReference>
<dbReference type="PDB" id="6L34">
    <property type="method" value="X-ray"/>
    <property type="resolution" value="2.00 A"/>
    <property type="chains" value="A=548-615"/>
</dbReference>
<dbReference type="PDB" id="6UPK">
    <property type="method" value="EM"/>
    <property type="resolution" value="4.90 A"/>
    <property type="chains" value="H=1-640"/>
</dbReference>
<dbReference type="PDB" id="6UPL">
    <property type="method" value="EM"/>
    <property type="resolution" value="7.40 A"/>
    <property type="chains" value="H=1-640"/>
</dbReference>
<dbReference type="PDB" id="9EH2">
    <property type="method" value="EM"/>
    <property type="resolution" value="3.10 A"/>
    <property type="chains" value="y=1-709"/>
</dbReference>
<dbReference type="PDBsum" id="4IFS"/>
<dbReference type="PDBsum" id="5UMR"/>
<dbReference type="PDBsum" id="5UMS"/>
<dbReference type="PDBsum" id="5VWE"/>
<dbReference type="PDBsum" id="6L1E"/>
<dbReference type="PDBsum" id="6L1R"/>
<dbReference type="PDBsum" id="6L34"/>
<dbReference type="PDBsum" id="6UPK"/>
<dbReference type="PDBsum" id="6UPL"/>
<dbReference type="PDBsum" id="9EH2"/>
<dbReference type="EMDB" id="EMD-20840"/>
<dbReference type="EMDB" id="EMD-20841"/>
<dbReference type="EMDB" id="EMD-48044"/>
<dbReference type="SMR" id="Q08945"/>
<dbReference type="BioGRID" id="112627">
    <property type="interactions" value="702"/>
</dbReference>
<dbReference type="ComplexPortal" id="CPX-419">
    <property type="entry name" value="FACT complex"/>
</dbReference>
<dbReference type="CORUM" id="Q08945"/>
<dbReference type="DIP" id="DIP-169N"/>
<dbReference type="FunCoup" id="Q08945">
    <property type="interactions" value="3854"/>
</dbReference>
<dbReference type="IntAct" id="Q08945">
    <property type="interactions" value="487"/>
</dbReference>
<dbReference type="MINT" id="Q08945"/>
<dbReference type="STRING" id="9606.ENSP00000278412"/>
<dbReference type="GlyGen" id="Q08945">
    <property type="glycosylation" value="2 sites, 1 N-linked glycan (1 site), 1 O-linked glycan (1 site)"/>
</dbReference>
<dbReference type="iPTMnet" id="Q08945"/>
<dbReference type="MetOSite" id="Q08945"/>
<dbReference type="PhosphoSitePlus" id="Q08945"/>
<dbReference type="SwissPalm" id="Q08945"/>
<dbReference type="BioMuta" id="SSRP1"/>
<dbReference type="jPOST" id="Q08945"/>
<dbReference type="MassIVE" id="Q08945"/>
<dbReference type="PaxDb" id="9606-ENSP00000278412"/>
<dbReference type="PeptideAtlas" id="Q08945"/>
<dbReference type="ProteomicsDB" id="58651"/>
<dbReference type="Pumba" id="Q08945"/>
<dbReference type="Antibodypedia" id="1060">
    <property type="antibodies" value="359 antibodies from 34 providers"/>
</dbReference>
<dbReference type="DNASU" id="6749"/>
<dbReference type="Ensembl" id="ENST00000278412.7">
    <property type="protein sequence ID" value="ENSP00000278412.2"/>
    <property type="gene ID" value="ENSG00000149136.9"/>
</dbReference>
<dbReference type="GeneID" id="6749"/>
<dbReference type="KEGG" id="hsa:6749"/>
<dbReference type="MANE-Select" id="ENST00000278412.7">
    <property type="protein sequence ID" value="ENSP00000278412.2"/>
    <property type="RefSeq nucleotide sequence ID" value="NM_003146.3"/>
    <property type="RefSeq protein sequence ID" value="NP_003137.1"/>
</dbReference>
<dbReference type="UCSC" id="uc001njt.3">
    <property type="organism name" value="human"/>
</dbReference>
<dbReference type="AGR" id="HGNC:11327"/>
<dbReference type="CTD" id="6749"/>
<dbReference type="DisGeNET" id="6749"/>
<dbReference type="GeneCards" id="SSRP1"/>
<dbReference type="HGNC" id="HGNC:11327">
    <property type="gene designation" value="SSRP1"/>
</dbReference>
<dbReference type="HPA" id="ENSG00000149136">
    <property type="expression patterns" value="Low tissue specificity"/>
</dbReference>
<dbReference type="MIM" id="604328">
    <property type="type" value="gene"/>
</dbReference>
<dbReference type="neXtProt" id="NX_Q08945"/>
<dbReference type="OpenTargets" id="ENSG00000149136"/>
<dbReference type="PharmGKB" id="PA36151"/>
<dbReference type="VEuPathDB" id="HostDB:ENSG00000149136"/>
<dbReference type="eggNOG" id="KOG0526">
    <property type="taxonomic scope" value="Eukaryota"/>
</dbReference>
<dbReference type="GeneTree" id="ENSGT00940000157117"/>
<dbReference type="HOGENOM" id="CLU_017374_2_1_1"/>
<dbReference type="InParanoid" id="Q08945"/>
<dbReference type="OMA" id="QVVTKIF"/>
<dbReference type="OrthoDB" id="498543at2759"/>
<dbReference type="PAN-GO" id="Q08945">
    <property type="GO annotations" value="4 GO annotations based on evolutionary models"/>
</dbReference>
<dbReference type="PhylomeDB" id="Q08945"/>
<dbReference type="TreeFam" id="TF315228"/>
<dbReference type="PathwayCommons" id="Q08945"/>
<dbReference type="Reactome" id="R-HSA-112382">
    <property type="pathway name" value="Formation of RNA Pol II elongation complex"/>
</dbReference>
<dbReference type="Reactome" id="R-HSA-167152">
    <property type="pathway name" value="Formation of HIV elongation complex in the absence of HIV Tat"/>
</dbReference>
<dbReference type="Reactome" id="R-HSA-167200">
    <property type="pathway name" value="Formation of HIV-1 elongation complex containing HIV-1 Tat"/>
</dbReference>
<dbReference type="Reactome" id="R-HSA-167238">
    <property type="pathway name" value="Pausing and recovery of Tat-mediated HIV elongation"/>
</dbReference>
<dbReference type="Reactome" id="R-HSA-167243">
    <property type="pathway name" value="Tat-mediated HIV elongation arrest and recovery"/>
</dbReference>
<dbReference type="Reactome" id="R-HSA-167246">
    <property type="pathway name" value="Tat-mediated elongation of the HIV-1 transcript"/>
</dbReference>
<dbReference type="Reactome" id="R-HSA-167287">
    <property type="pathway name" value="HIV elongation arrest and recovery"/>
</dbReference>
<dbReference type="Reactome" id="R-HSA-167290">
    <property type="pathway name" value="Pausing and recovery of HIV elongation"/>
</dbReference>
<dbReference type="Reactome" id="R-HSA-674695">
    <property type="pathway name" value="RNA Polymerase II Pre-transcription Events"/>
</dbReference>
<dbReference type="Reactome" id="R-HSA-6796648">
    <property type="pathway name" value="TP53 Regulates Transcription of DNA Repair Genes"/>
</dbReference>
<dbReference type="Reactome" id="R-HSA-6804756">
    <property type="pathway name" value="Regulation of TP53 Activity through Phosphorylation"/>
</dbReference>
<dbReference type="Reactome" id="R-HSA-75955">
    <property type="pathway name" value="RNA Polymerase II Transcription Elongation"/>
</dbReference>
<dbReference type="SignaLink" id="Q08945"/>
<dbReference type="SIGNOR" id="Q08945"/>
<dbReference type="BioGRID-ORCS" id="6749">
    <property type="hits" value="804 hits in 1200 CRISPR screens"/>
</dbReference>
<dbReference type="CD-CODE" id="91857CE7">
    <property type="entry name" value="Nucleolus"/>
</dbReference>
<dbReference type="ChiTaRS" id="SSRP1">
    <property type="organism name" value="human"/>
</dbReference>
<dbReference type="EvolutionaryTrace" id="Q08945"/>
<dbReference type="GeneWiki" id="Structure_specific_recognition_protein_1"/>
<dbReference type="GenomeRNAi" id="6749"/>
<dbReference type="Pharos" id="Q08945">
    <property type="development level" value="Tbio"/>
</dbReference>
<dbReference type="PRO" id="PR:Q08945"/>
<dbReference type="Proteomes" id="UP000005640">
    <property type="component" value="Chromosome 11"/>
</dbReference>
<dbReference type="RNAct" id="Q08945">
    <property type="molecule type" value="protein"/>
</dbReference>
<dbReference type="Bgee" id="ENSG00000149136">
    <property type="expression patterns" value="Expressed in ventricular zone and 202 other cell types or tissues"/>
</dbReference>
<dbReference type="ExpressionAtlas" id="Q08945">
    <property type="expression patterns" value="baseline and differential"/>
</dbReference>
<dbReference type="GO" id="GO:0035101">
    <property type="term" value="C:FACT complex"/>
    <property type="evidence" value="ECO:0000353"/>
    <property type="project" value="ComplexPortal"/>
</dbReference>
<dbReference type="GO" id="GO:0005730">
    <property type="term" value="C:nucleolus"/>
    <property type="evidence" value="ECO:0007669"/>
    <property type="project" value="UniProtKB-SubCell"/>
</dbReference>
<dbReference type="GO" id="GO:0005654">
    <property type="term" value="C:nucleoplasm"/>
    <property type="evidence" value="ECO:0000304"/>
    <property type="project" value="Reactome"/>
</dbReference>
<dbReference type="GO" id="GO:0005634">
    <property type="term" value="C:nucleus"/>
    <property type="evidence" value="ECO:0000314"/>
    <property type="project" value="ComplexPortal"/>
</dbReference>
<dbReference type="GO" id="GO:0003677">
    <property type="term" value="F:DNA binding"/>
    <property type="evidence" value="ECO:0000304"/>
    <property type="project" value="ProtInc"/>
</dbReference>
<dbReference type="GO" id="GO:0042393">
    <property type="term" value="F:histone binding"/>
    <property type="evidence" value="ECO:0000318"/>
    <property type="project" value="GO_Central"/>
</dbReference>
<dbReference type="GO" id="GO:0031491">
    <property type="term" value="F:nucleosome binding"/>
    <property type="evidence" value="ECO:0000318"/>
    <property type="project" value="GO_Central"/>
</dbReference>
<dbReference type="GO" id="GO:0003723">
    <property type="term" value="F:RNA binding"/>
    <property type="evidence" value="ECO:0007005"/>
    <property type="project" value="UniProtKB"/>
</dbReference>
<dbReference type="GO" id="GO:0006281">
    <property type="term" value="P:DNA repair"/>
    <property type="evidence" value="ECO:0007669"/>
    <property type="project" value="UniProtKB-KW"/>
</dbReference>
<dbReference type="GO" id="GO:0006260">
    <property type="term" value="P:DNA replication"/>
    <property type="evidence" value="ECO:0007669"/>
    <property type="project" value="UniProtKB-KW"/>
</dbReference>
<dbReference type="GO" id="GO:0006334">
    <property type="term" value="P:nucleosome assembly"/>
    <property type="evidence" value="ECO:0000303"/>
    <property type="project" value="ComplexPortal"/>
</dbReference>
<dbReference type="GO" id="GO:0006337">
    <property type="term" value="P:nucleosome disassembly"/>
    <property type="evidence" value="ECO:0000314"/>
    <property type="project" value="ComplexPortal"/>
</dbReference>
<dbReference type="GO" id="GO:1902275">
    <property type="term" value="P:regulation of chromatin organization"/>
    <property type="evidence" value="ECO:0000314"/>
    <property type="project" value="CACAO"/>
</dbReference>
<dbReference type="CDD" id="cd21994">
    <property type="entry name" value="HMG-box_SSRP1-like"/>
    <property type="match status" value="1"/>
</dbReference>
<dbReference type="CDD" id="cd13230">
    <property type="entry name" value="PH1_SSRP1-like"/>
    <property type="match status" value="1"/>
</dbReference>
<dbReference type="CDD" id="cd13231">
    <property type="entry name" value="PH2_SSRP1-like"/>
    <property type="match status" value="1"/>
</dbReference>
<dbReference type="FunFam" id="1.10.30.10:FF:000032">
    <property type="entry name" value="FACT complex subunit SSRP1"/>
    <property type="match status" value="1"/>
</dbReference>
<dbReference type="FunFam" id="2.30.29.220:FF:000001">
    <property type="entry name" value="FACT complex subunit SSRP1"/>
    <property type="match status" value="1"/>
</dbReference>
<dbReference type="FunFam" id="2.30.29.30:FF:000119">
    <property type="entry name" value="FACT complex subunit SSRP1"/>
    <property type="match status" value="1"/>
</dbReference>
<dbReference type="FunFam" id="2.30.29.150:FF:000001">
    <property type="entry name" value="Fact complex subunit ssrp1"/>
    <property type="match status" value="1"/>
</dbReference>
<dbReference type="FunFam" id="2.30.29.30:FF:000098">
    <property type="entry name" value="Fact complex subunit ssrp1"/>
    <property type="match status" value="1"/>
</dbReference>
<dbReference type="Gene3D" id="2.30.29.150">
    <property type="match status" value="1"/>
</dbReference>
<dbReference type="Gene3D" id="1.10.30.10">
    <property type="entry name" value="High mobility group box domain"/>
    <property type="match status" value="1"/>
</dbReference>
<dbReference type="Gene3D" id="2.30.29.30">
    <property type="entry name" value="Pleckstrin-homology domain (PH domain)/Phosphotyrosine-binding domain (PTB)"/>
    <property type="match status" value="2"/>
</dbReference>
<dbReference type="Gene3D" id="2.30.29.220">
    <property type="entry name" value="Structure-specific recognition protein (SSRP1)"/>
    <property type="match status" value="1"/>
</dbReference>
<dbReference type="InterPro" id="IPR009071">
    <property type="entry name" value="HMG_box_dom"/>
</dbReference>
<dbReference type="InterPro" id="IPR036910">
    <property type="entry name" value="HMG_box_dom_sf"/>
</dbReference>
<dbReference type="InterPro" id="IPR011993">
    <property type="entry name" value="PH-like_dom_sf"/>
</dbReference>
<dbReference type="InterPro" id="IPR013719">
    <property type="entry name" value="RTT106/SPT16-like_middle_dom"/>
</dbReference>
<dbReference type="InterPro" id="IPR050454">
    <property type="entry name" value="RTT106/SSRP1_HistChap/FACT"/>
</dbReference>
<dbReference type="InterPro" id="IPR048993">
    <property type="entry name" value="SSRP1-like_PH1"/>
</dbReference>
<dbReference type="InterPro" id="IPR000969">
    <property type="entry name" value="SSRP1/POB3"/>
</dbReference>
<dbReference type="InterPro" id="IPR035417">
    <property type="entry name" value="SSRP1/POB3_N"/>
</dbReference>
<dbReference type="InterPro" id="IPR048985">
    <property type="entry name" value="SSRP1_C"/>
</dbReference>
<dbReference type="InterPro" id="IPR024954">
    <property type="entry name" value="SSRP1_DD"/>
</dbReference>
<dbReference type="InterPro" id="IPR038167">
    <property type="entry name" value="SSRP1_sf"/>
</dbReference>
<dbReference type="PANTHER" id="PTHR45849">
    <property type="entry name" value="FACT COMPLEX SUBUNIT SSRP1"/>
    <property type="match status" value="1"/>
</dbReference>
<dbReference type="PANTHER" id="PTHR45849:SF1">
    <property type="entry name" value="FACT COMPLEX SUBUNIT SSRP1"/>
    <property type="match status" value="1"/>
</dbReference>
<dbReference type="Pfam" id="PF00505">
    <property type="entry name" value="HMG_box"/>
    <property type="match status" value="1"/>
</dbReference>
<dbReference type="Pfam" id="PF21103">
    <property type="entry name" value="PH1_SSRP1-like"/>
    <property type="match status" value="1"/>
</dbReference>
<dbReference type="Pfam" id="PF17292">
    <property type="entry name" value="POB3_N"/>
    <property type="match status" value="1"/>
</dbReference>
<dbReference type="Pfam" id="PF08512">
    <property type="entry name" value="Rttp106-like_middle"/>
    <property type="match status" value="1"/>
</dbReference>
<dbReference type="Pfam" id="PF03531">
    <property type="entry name" value="SSrecog"/>
    <property type="match status" value="1"/>
</dbReference>
<dbReference type="Pfam" id="PF21092">
    <property type="entry name" value="SSRP1_C"/>
    <property type="match status" value="1"/>
</dbReference>
<dbReference type="PRINTS" id="PR00887">
    <property type="entry name" value="SSRCOGNITION"/>
</dbReference>
<dbReference type="SMART" id="SM00398">
    <property type="entry name" value="HMG"/>
    <property type="match status" value="1"/>
</dbReference>
<dbReference type="SMART" id="SM01287">
    <property type="entry name" value="Rtt106"/>
    <property type="match status" value="1"/>
</dbReference>
<dbReference type="SUPFAM" id="SSF47095">
    <property type="entry name" value="HMG-box"/>
    <property type="match status" value="1"/>
</dbReference>
<dbReference type="SUPFAM" id="SSF50729">
    <property type="entry name" value="PH domain-like"/>
    <property type="match status" value="1"/>
</dbReference>
<dbReference type="PROSITE" id="PS50118">
    <property type="entry name" value="HMG_BOX_2"/>
    <property type="match status" value="1"/>
</dbReference>
<comment type="function">
    <text evidence="7 8 10 12 17 22 23 24">Component of the FACT complex, a general chromatin factor that acts to reorganize nucleosomes. The FACT complex is involved in multiple processes that require DNA as a template such as mRNA elongation, DNA replication and DNA repair. During transcription elongation the FACT complex acts as a histone chaperone that both destabilizes and restores nucleosomal structure. It facilitates the passage of RNA polymerase II and transcription by promoting the dissociation of one histone H2A-H2B dimer from the nucleosome, then subsequently promotes the reestablishment of the nucleosome following the passage of RNA polymerase II. The FACT complex is probably also involved in phosphorylation of 'Ser-392' of p53/TP53 via its association with CK2 (casein kinase II). Binds specifically to double-stranded DNA and at low levels to DNA modified by the antitumor agent cisplatin. May potentiate cisplatin-induced cell death by blocking replication and repair of modified DNA. Also acts as a transcriptional coactivator for p63/TP63.</text>
</comment>
<comment type="subunit">
    <text evidence="1 3 6 8 10 11 13 18 20">Interacts with MYOG (via C-terminal region) (By similarity). Component of the FACT complex, a stable heterodimer of SSRP1 and SUPT16H (PubMed:10421373). Also a component of a CK2-SPT16-SSRP1 complex which forms following UV irradiation, composed of SSRP1, SUPT16H, CSNK2A1, CSNK2A2 and CSNK2B (PubMed:11239457, PubMed:12393879). Binds to histone H3-H4 tetramers, but not to intact nucleosomes. Identified in a centromere complex containing histones H2A, H2B and H4, and at least CENPA, CENPB, CENPC, CENPT, CENPN, HJURP, SUPT16H, SSRP1 and RSF1 (PubMed:27499292). Interacts with isoform gamma of TP63 (PubMed:12374749). Interacts with FYTTD1/UIF (PubMed:19836239). Interacts with SRF (By similarity). Interacts with NEK9 (PubMed:14660563).</text>
</comment>
<comment type="subunit">
    <text evidence="21">(Microbial infection) Interacts with Herpes simplex virus 1 (HHV-1) protein ICP22; this interaction relocalizes the FACT complex to viral genomes in infected cells.</text>
</comment>
<comment type="interaction">
    <interactant intactId="EBI-353771">
        <id>Q08945</id>
    </interactant>
    <interactant intactId="EBI-347804">
        <id>P68400</id>
        <label>CSNK2A1</label>
    </interactant>
    <organismsDiffer>false</organismsDiffer>
    <experiments>4</experiments>
</comment>
<comment type="interaction">
    <interactant intactId="EBI-353771">
        <id>Q08945</id>
    </interactant>
    <interactant intactId="EBI-1056125">
        <id>Q16778</id>
        <label>H2BC21</label>
    </interactant>
    <organismsDiffer>false</organismsDiffer>
    <experiments>3</experiments>
</comment>
<comment type="interaction">
    <interactant intactId="EBI-353771">
        <id>Q08945</id>
    </interactant>
    <interactant intactId="EBI-374819">
        <id>P49736</id>
        <label>MCM2</label>
    </interactant>
    <organismsDiffer>false</organismsDiffer>
    <experiments>6</experiments>
</comment>
<comment type="interaction">
    <interactant intactId="EBI-353771">
        <id>Q08945</id>
    </interactant>
    <interactant intactId="EBI-374938">
        <id>P33991</id>
        <label>MCM4</label>
    </interactant>
    <organismsDiffer>false</organismsDiffer>
    <experiments>8</experiments>
</comment>
<comment type="interaction">
    <interactant intactId="EBI-353771">
        <id>Q08945</id>
    </interactant>
    <interactant intactId="EBI-374900">
        <id>Q14566</id>
        <label>MCM6</label>
    </interactant>
    <organismsDiffer>false</organismsDiffer>
    <experiments>4</experiments>
</comment>
<comment type="interaction">
    <interactant intactId="EBI-353771">
        <id>Q08945</id>
    </interactant>
    <interactant intactId="EBI-355924">
        <id>P33993</id>
        <label>MCM7</label>
    </interactant>
    <organismsDiffer>false</organismsDiffer>
    <experiments>3</experiments>
</comment>
<comment type="interaction">
    <interactant intactId="EBI-353771">
        <id>Q08945</id>
    </interactant>
    <interactant intactId="EBI-1046849">
        <id>Q9Y5B9</id>
        <label>SUPT16H</label>
    </interactant>
    <organismsDiffer>false</organismsDiffer>
    <experiments>10</experiments>
</comment>
<comment type="subcellular location">
    <subcellularLocation>
        <location evidence="6 19">Nucleus</location>
    </subcellularLocation>
    <subcellularLocation>
        <location evidence="19">Nucleus</location>
        <location evidence="19">Nucleolus</location>
    </subcellularLocation>
    <subcellularLocation>
        <location evidence="6">Chromosome</location>
    </subcellularLocation>
    <text evidence="2">Colocalizes with RNA polymerase II on chromatin. Recruited to actively transcribed loci.</text>
</comment>
<comment type="domain">
    <text evidence="9">The HMG box DNA-binding domain mediates DNA-binding. It has both affinity and specificity for DNA damaged globally with cisplatin.</text>
</comment>
<comment type="PTM">
    <text evidence="11 15">Phosphorylated by CK2 following UV but not gamma irradiation. Phosphorylation inhibits its DNA-binding activity.</text>
</comment>
<comment type="PTM">
    <text evidence="16">Ubiquitinated. Polyubiquitinated following caspase cleavage resulting in degradation of the N-terminal ubiquitinated part of the cleaved protein.</text>
</comment>
<comment type="PTM">
    <text evidence="14">Sumoylated.</text>
</comment>
<comment type="miscellaneous">
    <text>Autoantibodies against SSRP1 are present in sera from patients with systemic lupus erythematosus, but not other rheumatic diseases.</text>
</comment>
<comment type="similarity">
    <text evidence="26">Belongs to the SSRP1 family.</text>
</comment>
<comment type="sequence caution" evidence="26">
    <conflict type="miscellaneous discrepancy">
        <sequence resource="EMBL-CDS" id="AAH91486"/>
    </conflict>
    <text>Contaminating sequence. Potential poly-A sequence.</text>
</comment>
<evidence type="ECO:0000250" key="1">
    <source>
        <dbReference type="UniProtKB" id="Q04931"/>
    </source>
</evidence>
<evidence type="ECO:0000250" key="2">
    <source>
        <dbReference type="UniProtKB" id="Q05344"/>
    </source>
</evidence>
<evidence type="ECO:0000250" key="3">
    <source>
        <dbReference type="UniProtKB" id="Q08943"/>
    </source>
</evidence>
<evidence type="ECO:0000255" key="4">
    <source>
        <dbReference type="PROSITE-ProRule" id="PRU00267"/>
    </source>
</evidence>
<evidence type="ECO:0000256" key="5">
    <source>
        <dbReference type="SAM" id="MobiDB-lite"/>
    </source>
</evidence>
<evidence type="ECO:0000269" key="6">
    <source>
    </source>
</evidence>
<evidence type="ECO:0000269" key="7">
    <source>
    </source>
</evidence>
<evidence type="ECO:0000269" key="8">
    <source>
    </source>
</evidence>
<evidence type="ECO:0000269" key="9">
    <source>
    </source>
</evidence>
<evidence type="ECO:0000269" key="10">
    <source>
    </source>
</evidence>
<evidence type="ECO:0000269" key="11">
    <source>
    </source>
</evidence>
<evidence type="ECO:0000269" key="12">
    <source>
    </source>
</evidence>
<evidence type="ECO:0000269" key="13">
    <source>
    </source>
</evidence>
<evidence type="ECO:0000269" key="14">
    <source>
    </source>
</evidence>
<evidence type="ECO:0000269" key="15">
    <source>
    </source>
</evidence>
<evidence type="ECO:0000269" key="16">
    <source>
    </source>
</evidence>
<evidence type="ECO:0000269" key="17">
    <source>
    </source>
</evidence>
<evidence type="ECO:0000269" key="18">
    <source>
    </source>
</evidence>
<evidence type="ECO:0000269" key="19">
    <source>
    </source>
</evidence>
<evidence type="ECO:0000269" key="20">
    <source>
    </source>
</evidence>
<evidence type="ECO:0000269" key="21">
    <source>
    </source>
</evidence>
<evidence type="ECO:0000269" key="22">
    <source>
    </source>
</evidence>
<evidence type="ECO:0000269" key="23">
    <source>
    </source>
</evidence>
<evidence type="ECO:0000269" key="24">
    <source>
    </source>
</evidence>
<evidence type="ECO:0000269" key="25">
    <source ref="3"/>
</evidence>
<evidence type="ECO:0000305" key="26"/>
<evidence type="ECO:0000305" key="27">
    <source>
    </source>
</evidence>
<evidence type="ECO:0007744" key="28">
    <source>
    </source>
</evidence>
<evidence type="ECO:0007744" key="29">
    <source>
    </source>
</evidence>
<evidence type="ECO:0007744" key="30">
    <source>
    </source>
</evidence>
<evidence type="ECO:0007744" key="31">
    <source>
    </source>
</evidence>
<evidence type="ECO:0007744" key="32">
    <source>
    </source>
</evidence>
<evidence type="ECO:0007744" key="33">
    <source>
    </source>
</evidence>
<evidence type="ECO:0007744" key="34">
    <source>
    </source>
</evidence>
<evidence type="ECO:0007744" key="35">
    <source>
    </source>
</evidence>
<evidence type="ECO:0007744" key="36">
    <source>
    </source>
</evidence>
<evidence type="ECO:0007744" key="37">
    <source>
    </source>
</evidence>
<evidence type="ECO:0007744" key="38">
    <source>
    </source>
</evidence>
<evidence type="ECO:0007744" key="39">
    <source>
    </source>
</evidence>
<evidence type="ECO:0007744" key="40">
    <source>
    </source>
</evidence>
<evidence type="ECO:0007829" key="41">
    <source>
        <dbReference type="PDB" id="5UMR"/>
    </source>
</evidence>
<evidence type="ECO:0007829" key="42">
    <source>
        <dbReference type="PDB" id="5UMS"/>
    </source>
</evidence>
<evidence type="ECO:0007829" key="43">
    <source>
        <dbReference type="PDB" id="6L34"/>
    </source>
</evidence>
<feature type="initiator methionine" description="Removed" evidence="25 31 36 37">
    <location>
        <position position="1"/>
    </location>
</feature>
<feature type="chain" id="PRO_0000048606" description="FACT complex subunit SSRP1">
    <location>
        <begin position="2"/>
        <end position="709"/>
    </location>
</feature>
<feature type="DNA-binding region" description="HMG box" evidence="4">
    <location>
        <begin position="547"/>
        <end position="615"/>
    </location>
</feature>
<feature type="region of interest" description="Disordered" evidence="5">
    <location>
        <begin position="458"/>
        <end position="709"/>
    </location>
</feature>
<feature type="compositionally biased region" description="Acidic residues" evidence="5">
    <location>
        <begin position="470"/>
        <end position="496"/>
    </location>
</feature>
<feature type="compositionally biased region" description="Low complexity" evidence="5">
    <location>
        <begin position="497"/>
        <end position="507"/>
    </location>
</feature>
<feature type="compositionally biased region" description="Basic residues" evidence="5">
    <location>
        <begin position="515"/>
        <end position="533"/>
    </location>
</feature>
<feature type="compositionally biased region" description="Basic and acidic residues" evidence="5">
    <location>
        <begin position="534"/>
        <end position="546"/>
    </location>
</feature>
<feature type="compositionally biased region" description="Basic and acidic residues" evidence="5">
    <location>
        <begin position="577"/>
        <end position="624"/>
    </location>
</feature>
<feature type="compositionally biased region" description="Basic residues" evidence="5">
    <location>
        <begin position="625"/>
        <end position="634"/>
    </location>
</feature>
<feature type="compositionally biased region" description="Low complexity" evidence="5">
    <location>
        <begin position="643"/>
        <end position="659"/>
    </location>
</feature>
<feature type="compositionally biased region" description="Polar residues" evidence="5">
    <location>
        <begin position="696"/>
        <end position="709"/>
    </location>
</feature>
<feature type="site" description="Cleavage; by caspase-3 and/or caspase-7">
    <location>
        <begin position="450"/>
        <end position="451"/>
    </location>
</feature>
<feature type="modified residue" description="N-acetylalanine" evidence="25 31 36 37">
    <location>
        <position position="2"/>
    </location>
</feature>
<feature type="modified residue" description="Phosphothreonine" evidence="30 34">
    <location>
        <position position="170"/>
    </location>
</feature>
<feature type="modified residue" description="N6-acetyllysine" evidence="32">
    <location>
        <position position="233"/>
    </location>
</feature>
<feature type="modified residue" description="N6-acetyllysine" evidence="32">
    <location>
        <position position="413"/>
    </location>
</feature>
<feature type="modified residue" description="Phosphoserine" evidence="30">
    <location>
        <position position="437"/>
    </location>
</feature>
<feature type="modified residue" description="Phosphotyrosine" evidence="3">
    <location>
        <position position="441"/>
    </location>
</feature>
<feature type="modified residue" description="Phosphoserine" evidence="28 29 30 33 34 35 38 39">
    <location>
        <position position="444"/>
    </location>
</feature>
<feature type="modified residue" description="Phosphotyrosine" evidence="3">
    <location>
        <position position="452"/>
    </location>
</feature>
<feature type="modified residue" description="Phosphoserine" evidence="39">
    <location>
        <position position="471"/>
    </location>
</feature>
<feature type="modified residue" description="Phosphoserine; by CK2" evidence="27">
    <location>
        <position position="510"/>
    </location>
</feature>
<feature type="modified residue" description="N6-acetyllysine" evidence="3">
    <location>
        <position position="542"/>
    </location>
</feature>
<feature type="modified residue" description="Phosphoserine" evidence="15 35">
    <location>
        <position position="657"/>
    </location>
</feature>
<feature type="modified residue" description="Phosphoserine" evidence="38">
    <location>
        <position position="659"/>
    </location>
</feature>
<feature type="modified residue" description="Phosphoserine" evidence="30 35 38">
    <location>
        <position position="667"/>
    </location>
</feature>
<feature type="modified residue" description="Phosphoserine" evidence="30 35">
    <location>
        <position position="668"/>
    </location>
</feature>
<feature type="modified residue" description="Phosphoserine" evidence="30 35">
    <location>
        <position position="671"/>
    </location>
</feature>
<feature type="modified residue" description="Phosphoserine" evidence="30">
    <location>
        <position position="672"/>
    </location>
</feature>
<feature type="modified residue" description="Phosphoserine" evidence="30">
    <location>
        <position position="673"/>
    </location>
</feature>
<feature type="modified residue" description="Phosphoserine; by CK2" evidence="27">
    <location>
        <position position="688"/>
    </location>
</feature>
<feature type="cross-link" description="Glycyl lysine isopeptide (Lys-Gly) (interchain with G-Cter in SUMO2)" evidence="40">
    <location>
        <position position="90"/>
    </location>
</feature>
<feature type="cross-link" description="Glycyl lysine isopeptide (Lys-Gly) (interchain with G-Cter in SUMO2)" evidence="40">
    <location>
        <position position="296"/>
    </location>
</feature>
<feature type="cross-link" description="Glycyl lysine isopeptide (Lys-Gly) (interchain with G-Cter in SUMO2)" evidence="40">
    <location>
        <position position="364"/>
    </location>
</feature>
<feature type="sequence variant" id="VAR_052495" description="In dbSNP:rs768436.">
    <original>L</original>
    <variation>V</variation>
    <location>
        <position position="225"/>
    </location>
</feature>
<feature type="sequence variant" id="VAR_052496" description="In dbSNP:rs11540304.">
    <original>E</original>
    <variation>Q</variation>
    <location>
        <position position="458"/>
    </location>
</feature>
<feature type="mutagenesis site" description="Abolishes cleavage by caspase." evidence="16">
    <original>D</original>
    <variation>A</variation>
    <location>
        <position position="450"/>
    </location>
</feature>
<feature type="mutagenesis site" description="Unable to bind DNA; when associated with A-657 and A-688." evidence="15">
    <original>S</original>
    <variation>A</variation>
    <location>
        <position position="510"/>
    </location>
</feature>
<feature type="mutagenesis site" description="Unable to bind DNA; when associated with A-510 and A-688. Still able to bind DNA; when associated with A-688." evidence="15">
    <original>S</original>
    <variation>A</variation>
    <location>
        <position position="657"/>
    </location>
</feature>
<feature type="mutagenesis site" description="Unable to bind DNA; when associated with A-510 and A-657. Still able to bind DNA; when associated with A-657." evidence="15">
    <original>S</original>
    <variation>A</variation>
    <location>
        <position position="688"/>
    </location>
</feature>
<feature type="strand" evidence="41">
    <location>
        <begin position="3"/>
        <end position="14"/>
    </location>
</feature>
<feature type="strand" evidence="41">
    <location>
        <begin position="17"/>
        <end position="34"/>
    </location>
</feature>
<feature type="turn" evidence="41">
    <location>
        <begin position="35"/>
        <end position="37"/>
    </location>
</feature>
<feature type="strand" evidence="41">
    <location>
        <begin position="40"/>
        <end position="44"/>
    </location>
</feature>
<feature type="helix" evidence="41">
    <location>
        <begin position="45"/>
        <end position="47"/>
    </location>
</feature>
<feature type="strand" evidence="41">
    <location>
        <begin position="48"/>
        <end position="55"/>
    </location>
</feature>
<feature type="strand" evidence="41">
    <location>
        <begin position="57"/>
        <end position="66"/>
    </location>
</feature>
<feature type="strand" evidence="41">
    <location>
        <begin position="71"/>
        <end position="77"/>
    </location>
</feature>
<feature type="helix" evidence="41">
    <location>
        <begin position="79"/>
        <end position="81"/>
    </location>
</feature>
<feature type="helix" evidence="41">
    <location>
        <begin position="82"/>
        <end position="92"/>
    </location>
</feature>
<feature type="strand" evidence="42">
    <location>
        <begin position="198"/>
        <end position="209"/>
    </location>
</feature>
<feature type="strand" evidence="42">
    <location>
        <begin position="212"/>
        <end position="218"/>
    </location>
</feature>
<feature type="strand" evidence="42">
    <location>
        <begin position="220"/>
        <end position="229"/>
    </location>
</feature>
<feature type="strand" evidence="42">
    <location>
        <begin position="231"/>
        <end position="235"/>
    </location>
</feature>
<feature type="helix" evidence="42">
    <location>
        <begin position="236"/>
        <end position="238"/>
    </location>
</feature>
<feature type="strand" evidence="42">
    <location>
        <begin position="239"/>
        <end position="246"/>
    </location>
</feature>
<feature type="strand" evidence="42">
    <location>
        <begin position="250"/>
        <end position="265"/>
    </location>
</feature>
<feature type="strand" evidence="42">
    <location>
        <begin position="268"/>
        <end position="278"/>
    </location>
</feature>
<feature type="strand" evidence="42">
    <location>
        <begin position="282"/>
        <end position="286"/>
    </location>
</feature>
<feature type="helix" evidence="42">
    <location>
        <begin position="291"/>
        <end position="298"/>
    </location>
</feature>
<feature type="strand" evidence="42">
    <location>
        <begin position="304"/>
        <end position="309"/>
    </location>
</feature>
<feature type="helix" evidence="42">
    <location>
        <begin position="310"/>
        <end position="321"/>
    </location>
</feature>
<feature type="strand" evidence="42">
    <location>
        <begin position="322"/>
        <end position="324"/>
    </location>
</feature>
<feature type="strand" evidence="42">
    <location>
        <begin position="335"/>
        <end position="337"/>
    </location>
</feature>
<feature type="strand" evidence="42">
    <location>
        <begin position="339"/>
        <end position="345"/>
    </location>
</feature>
<feature type="strand" evidence="42">
    <location>
        <begin position="348"/>
        <end position="354"/>
    </location>
</feature>
<feature type="strand" evidence="42">
    <location>
        <begin position="356"/>
        <end position="365"/>
    </location>
</feature>
<feature type="strand" evidence="42">
    <location>
        <begin position="367"/>
        <end position="370"/>
    </location>
</feature>
<feature type="helix" evidence="42">
    <location>
        <begin position="371"/>
        <end position="373"/>
    </location>
</feature>
<feature type="strand" evidence="42">
    <location>
        <begin position="374"/>
        <end position="381"/>
    </location>
</feature>
<feature type="strand" evidence="42">
    <location>
        <begin position="383"/>
        <end position="385"/>
    </location>
</feature>
<feature type="strand" evidence="42">
    <location>
        <begin position="388"/>
        <end position="395"/>
    </location>
</feature>
<feature type="strand" evidence="42">
    <location>
        <begin position="400"/>
        <end position="407"/>
    </location>
</feature>
<feature type="helix" evidence="42">
    <location>
        <begin position="408"/>
        <end position="410"/>
    </location>
</feature>
<feature type="helix" evidence="42">
    <location>
        <begin position="411"/>
        <end position="420"/>
    </location>
</feature>
<feature type="helix" evidence="43">
    <location>
        <begin position="549"/>
        <end position="568"/>
    </location>
</feature>
<feature type="helix" evidence="43">
    <location>
        <begin position="574"/>
        <end position="587"/>
    </location>
</feature>
<feature type="helix" evidence="43">
    <location>
        <begin position="590"/>
        <end position="614"/>
    </location>
</feature>
<accession>Q08945</accession>
<accession>Q5BJG8</accession>
<keyword id="KW-0002">3D-structure</keyword>
<keyword id="KW-0007">Acetylation</keyword>
<keyword id="KW-0158">Chromosome</keyword>
<keyword id="KW-0903">Direct protein sequencing</keyword>
<keyword id="KW-0227">DNA damage</keyword>
<keyword id="KW-0234">DNA repair</keyword>
<keyword id="KW-0235">DNA replication</keyword>
<keyword id="KW-0238">DNA-binding</keyword>
<keyword id="KW-0945">Host-virus interaction</keyword>
<keyword id="KW-1017">Isopeptide bond</keyword>
<keyword id="KW-0539">Nucleus</keyword>
<keyword id="KW-0597">Phosphoprotein</keyword>
<keyword id="KW-1267">Proteomics identification</keyword>
<keyword id="KW-1185">Reference proteome</keyword>
<keyword id="KW-0804">Transcription</keyword>
<keyword id="KW-0805">Transcription regulation</keyword>
<keyword id="KW-0832">Ubl conjugation</keyword>
<proteinExistence type="evidence at protein level"/>
<gene>
    <name type="primary">SSRP1</name>
    <name type="synonym">FACT80</name>
</gene>
<protein>
    <recommendedName>
        <fullName>FACT complex subunit SSRP1</fullName>
    </recommendedName>
    <alternativeName>
        <fullName>Chromatin-specific transcription elongation factor 80 kDa subunit</fullName>
    </alternativeName>
    <alternativeName>
        <fullName>Facilitates chromatin transcription complex 80 kDa subunit</fullName>
        <shortName>FACT 80 kDa subunit</shortName>
        <shortName>FACTp80</shortName>
    </alternativeName>
    <alternativeName>
        <fullName>Facilitates chromatin transcription complex subunit SSRP1</fullName>
    </alternativeName>
    <alternativeName>
        <fullName>Recombination signal sequence recognition protein 1</fullName>
    </alternativeName>
    <alternativeName>
        <fullName>Structure-specific recognition protein 1</fullName>
        <shortName>hSSRP1</shortName>
    </alternativeName>
    <alternativeName>
        <fullName>T160</fullName>
    </alternativeName>
</protein>
<name>SSRP1_HUMAN</name>
<reference key="1">
    <citation type="journal article" date="1992" name="Proc. Natl. Acad. Sci. U.S.A.">
        <title>Isolation and characterization of human cDNA clones encoding a high mobility group box protein that recognizes structural distortions to DNA caused by binding of the anticancer agent cisplatin.</title>
        <authorList>
            <person name="Bruhn S.L."/>
            <person name="Pil P.M."/>
            <person name="Essigmann J.M."/>
            <person name="Housman D.E."/>
            <person name="Lippard S.J."/>
        </authorList>
    </citation>
    <scope>NUCLEOTIDE SEQUENCE [MRNA]</scope>
    <source>
        <tissue>B-cell</tissue>
    </source>
</reference>
<reference key="2">
    <citation type="journal article" date="2004" name="Genome Res.">
        <title>The status, quality, and expansion of the NIH full-length cDNA project: the Mammalian Gene Collection (MGC).</title>
        <authorList>
            <consortium name="The MGC Project Team"/>
        </authorList>
    </citation>
    <scope>NUCLEOTIDE SEQUENCE [LARGE SCALE MRNA]</scope>
    <source>
        <tissue>Lung</tissue>
        <tissue>Uterus</tissue>
    </source>
</reference>
<reference key="3">
    <citation type="submission" date="2008-03" db="UniProtKB">
        <authorList>
            <person name="Bienvenut W.V."/>
            <person name="Vousden K.H."/>
            <person name="Lukashchuk N."/>
        </authorList>
    </citation>
    <scope>PROTEIN SEQUENCE OF 2-15; 234-241; 252-264; 305-316; 388-396 AND 414-421</scope>
    <scope>CLEAVAGE OF INITIATOR METHIONINE</scope>
    <scope>ACETYLATION AT ALA-2</scope>
    <scope>IDENTIFICATION BY MASS SPECTROMETRY</scope>
    <source>
        <tissue>Lung carcinoma</tissue>
    </source>
</reference>
<reference key="4">
    <citation type="journal article" date="1998" name="Cell">
        <title>FACT, a factor that facilitates transcript elongation through nucleosomes.</title>
        <authorList>
            <person name="Orphanides G."/>
            <person name="LeRoy G."/>
            <person name="Chang C.-H."/>
            <person name="Luse D.S."/>
            <person name="Reinberg D."/>
        </authorList>
    </citation>
    <scope>FUNCTION</scope>
</reference>
<reference key="5">
    <citation type="journal article" date="1998" name="Mol. Cell. Biol.">
        <title>The HMG domain protein SSRP1/PREIIBF is involved in activation of the human embryonic beta-like globin gene.</title>
        <authorList>
            <person name="Dyer M.A."/>
            <person name="Hayes P.J."/>
            <person name="Baron M.H."/>
        </authorList>
    </citation>
    <scope>FUNCTION</scope>
</reference>
<reference key="6">
    <citation type="journal article" date="1998" name="Science">
        <title>Requirement of RSF and FACT for transcription of chromatin templates in vitro.</title>
        <authorList>
            <person name="LeRoy G."/>
            <person name="Orphanides G."/>
            <person name="Lane W.S."/>
            <person name="Reinberg D."/>
        </authorList>
    </citation>
    <scope>FUNCTION</scope>
</reference>
<reference key="7">
    <citation type="journal article" date="1999" name="Nature">
        <title>The chromatin-specific transcription elongation factor FACT comprises human SPT16 and SSRP1 proteins.</title>
        <authorList>
            <person name="Orphanides G."/>
            <person name="Wu W.-H."/>
            <person name="Lane W.S."/>
            <person name="Hampsey M."/>
            <person name="Reinberg D."/>
        </authorList>
    </citation>
    <scope>IDENTIFICATION BY MASS SPECTROMETRY</scope>
    <scope>SUBCELLULAR LOCATION</scope>
    <scope>INTERACTION WITH SUPT16H</scope>
</reference>
<reference key="8">
    <citation type="journal article" date="2000" name="Mol. Cell">
        <title>FACT relieves DSIF/NELF-mediated inhibition of transcriptional elongation and reveals functional differences between P-TEFb and TFIIH.</title>
        <authorList>
            <person name="Wada T."/>
            <person name="Orphanides G."/>
            <person name="Hasegawa J."/>
            <person name="Kim D.-K."/>
            <person name="Shima D."/>
            <person name="Yamaguchi Y."/>
            <person name="Fukuda A."/>
            <person name="Hisatake K."/>
            <person name="Oh S."/>
            <person name="Reinberg D."/>
            <person name="Handa H."/>
        </authorList>
    </citation>
    <scope>FUNCTION</scope>
</reference>
<reference key="9">
    <citation type="journal article" date="2001" name="J. Biol. Chem.">
        <title>Interaction of FACT, SSRP1, and the high mobility group (HMG) domain of SSRP1 with DNA damaged by the anticancer drug cisplatin.</title>
        <authorList>
            <person name="Yarnell A.T."/>
            <person name="Oh S."/>
            <person name="Reinberg D."/>
            <person name="Lippard S.J."/>
        </authorList>
    </citation>
    <scope>DOMAIN</scope>
</reference>
<reference key="10">
    <citation type="journal article" date="2001" name="Mol. Cell">
        <title>A DNA damage-induced p53 serine 392 kinase complex contains CK2, hSpt16, and SSRP1.</title>
        <authorList>
            <person name="Keller D.M."/>
            <person name="Zeng X."/>
            <person name="Wang Y."/>
            <person name="Zhang Q.H."/>
            <person name="Kapoor M."/>
            <person name="Shu H."/>
            <person name="Goodman R."/>
            <person name="Lozano G."/>
            <person name="Zhao Y."/>
            <person name="Lu H."/>
        </authorList>
    </citation>
    <scope>FUNCTION</scope>
    <scope>INTERACTION WITH SUPT16H; CSNK2A1; CSNK2A2 AND CSNK2B</scope>
</reference>
<reference key="11">
    <citation type="journal article" date="2002" name="EMBO J.">
        <title>SSRP1 functions as a co-activator of the transcriptional activator p63.</title>
        <authorList>
            <person name="Zeng S.X."/>
            <person name="Dai M.-S."/>
            <person name="Keller D.M."/>
            <person name="Lu H."/>
        </authorList>
    </citation>
    <scope>FUNCTION</scope>
    <scope>INTERACTION WITH TP63</scope>
</reference>
<reference key="12">
    <citation type="journal article" date="2004" name="EMBO J.">
        <authorList>
            <person name="Zeng S.X."/>
            <person name="Dai M.-S."/>
            <person name="Keller D.M."/>
            <person name="Lu H."/>
        </authorList>
    </citation>
    <scope>ERRATUM OF PUBMED:12374749</scope>
</reference>
<reference key="13">
    <citation type="journal article" date="2002" name="J. Biol. Chem.">
        <title>p53 serine 392 phosphorylation increases after UV through induction of the assembly of the CK2.hSPT16.SSRP1 complex.</title>
        <authorList>
            <person name="Keller D.M."/>
            <person name="Lu H."/>
        </authorList>
    </citation>
    <scope>INTERACTION WITH SUPT16H; CSNK2A1; CSNK2A2 AND CSNK2B</scope>
    <scope>PHOSPHORYLATION</scope>
</reference>
<reference key="14">
    <citation type="journal article" date="2002" name="J. Rheumatol.">
        <title>High prevalence of autoantibodies against the nuclear high mobility group (HMG) protein SSRP1 in sera from patients with systemic lupus erythematosus, but not other rheumatic diseases.</title>
        <authorList>
            <person name="Santoro P."/>
            <person name="De Andrea M."/>
            <person name="Migliaretti G."/>
            <person name="Trapani C."/>
            <person name="Landolfo S."/>
            <person name="Gariglio M."/>
        </authorList>
    </citation>
    <scope>AUTOANTIBODIES</scope>
</reference>
<reference key="15">
    <citation type="journal article" date="2003" name="Science">
        <title>FACT facilitates transcription-dependent nucleosome alteration.</title>
        <authorList>
            <person name="Belotserkovskaya R."/>
            <person name="Oh S."/>
            <person name="Bondarenko V.A."/>
            <person name="Orphanides G."/>
            <person name="Studitsky V.M."/>
            <person name="Reinberg D."/>
        </authorList>
    </citation>
    <scope>FUNCTION</scope>
</reference>
<reference key="16">
    <citation type="journal article" date="2004" name="J. Biol. Chem.">
        <title>Nek9, a novel FACT-associated protein, modulates interphase progression.</title>
        <authorList>
            <person name="Tan B.C.-M."/>
            <person name="Lee S.-C."/>
        </authorList>
    </citation>
    <scope>INTERACTION WITH NEK9</scope>
</reference>
<reference key="17">
    <citation type="journal article" date="2005" name="J. Biol. Chem.">
        <title>Systematic identification and analysis of mammalian small ubiquitin-like modifier substrates.</title>
        <authorList>
            <person name="Gocke C.B."/>
            <person name="Yu H."/>
            <person name="Kang J."/>
        </authorList>
    </citation>
    <scope>SUMOYLATION</scope>
</reference>
<reference key="18">
    <citation type="journal article" date="2005" name="J. Biol. Chem.">
        <title>CK2 phosphorylates SSRP1 and inhibits its DNA-binding activity.</title>
        <authorList>
            <person name="Li Y."/>
            <person name="Keller D.M."/>
            <person name="Scott J.D."/>
            <person name="Lu H."/>
        </authorList>
    </citation>
    <scope>PHOSPHORYLATION AT SER-510; SER-657 AND SER-688</scope>
    <scope>MUTAGENESIS OF SER-510; SER-657 AND SER-688</scope>
</reference>
<reference key="19">
    <citation type="journal article" date="2006" name="Cell">
        <title>Histone H2B monoubiquitination functions cooperatively with FACT to regulate elongation by RNA polymerase II.</title>
        <authorList>
            <person name="Pavri R."/>
            <person name="Zhu B."/>
            <person name="Li G."/>
            <person name="Trojer P."/>
            <person name="Mandal S."/>
            <person name="Shilatifard A."/>
            <person name="Reinberg D."/>
        </authorList>
    </citation>
    <scope>FUNCTION</scope>
</reference>
<reference key="20">
    <citation type="journal article" date="2006" name="Cell">
        <title>Global, in vivo, and site-specific phosphorylation dynamics in signaling networks.</title>
        <authorList>
            <person name="Olsen J.V."/>
            <person name="Blagoev B."/>
            <person name="Gnad F."/>
            <person name="Macek B."/>
            <person name="Kumar C."/>
            <person name="Mortensen P."/>
            <person name="Mann M."/>
        </authorList>
    </citation>
    <scope>IDENTIFICATION BY MASS SPECTROMETRY [LARGE SCALE ANALYSIS]</scope>
    <source>
        <tissue>Cervix carcinoma</tissue>
    </source>
</reference>
<reference key="21">
    <citation type="journal article" date="2006" name="Cell Death Differ.">
        <title>Coupling caspase cleavage and ubiquitin-proteasome-dependent degradation of SSRP1 during apoptosis.</title>
        <authorList>
            <person name="Landais I."/>
            <person name="Lee H."/>
            <person name="Lu H."/>
        </authorList>
    </citation>
    <scope>CLEAVAGE SITE</scope>
    <scope>UBIQUITINATION</scope>
    <scope>MUTAGENESIS OF ASP-450</scope>
</reference>
<reference key="22">
    <citation type="journal article" date="2008" name="J. Proteome Res.">
        <title>Combining protein-based IMAC, peptide-based IMAC, and MudPIT for efficient phosphoproteomic analysis.</title>
        <authorList>
            <person name="Cantin G.T."/>
            <person name="Yi W."/>
            <person name="Lu B."/>
            <person name="Park S.K."/>
            <person name="Xu T."/>
            <person name="Lee J.-D."/>
            <person name="Yates J.R. III"/>
        </authorList>
    </citation>
    <scope>PHOSPHORYLATION [LARGE SCALE ANALYSIS] AT SER-444</scope>
    <scope>IDENTIFICATION BY MASS SPECTROMETRY [LARGE SCALE ANALYSIS]</scope>
    <source>
        <tissue>Cervix carcinoma</tissue>
    </source>
</reference>
<reference key="23">
    <citation type="journal article" date="2008" name="Proc. Natl. Acad. Sci. U.S.A.">
        <title>A quantitative atlas of mitotic phosphorylation.</title>
        <authorList>
            <person name="Dephoure N."/>
            <person name="Zhou C."/>
            <person name="Villen J."/>
            <person name="Beausoleil S.A."/>
            <person name="Bakalarski C.E."/>
            <person name="Elledge S.J."/>
            <person name="Gygi S.P."/>
        </authorList>
    </citation>
    <scope>PHOSPHORYLATION [LARGE SCALE ANALYSIS] AT THR-170; SER-437; SER-444; SER-667; SER-668; SER-671; SER-672 AND SER-673</scope>
    <scope>IDENTIFICATION BY MASS SPECTROMETRY [LARGE SCALE ANALYSIS]</scope>
    <source>
        <tissue>Cervix carcinoma</tissue>
    </source>
</reference>
<reference key="24">
    <citation type="journal article" date="2008" name="Proteomics">
        <title>Large-scale phosphoproteome analysis of human liver tissue by enrichment and fractionation of phosphopeptides with strong anion exchange chromatography.</title>
        <authorList>
            <person name="Han G."/>
            <person name="Ye M."/>
            <person name="Zhou H."/>
            <person name="Jiang X."/>
            <person name="Feng S."/>
            <person name="Jiang X."/>
            <person name="Tian R."/>
            <person name="Wan D."/>
            <person name="Zou H."/>
            <person name="Gu J."/>
        </authorList>
    </citation>
    <scope>PHOSPHORYLATION [LARGE SCALE ANALYSIS] AT SER-444</scope>
    <scope>IDENTIFICATION BY MASS SPECTROMETRY [LARGE SCALE ANALYSIS]</scope>
    <source>
        <tissue>Liver</tissue>
    </source>
</reference>
<reference key="25">
    <citation type="journal article" date="2009" name="Anal. Chem.">
        <title>Lys-N and trypsin cover complementary parts of the phosphoproteome in a refined SCX-based approach.</title>
        <authorList>
            <person name="Gauci S."/>
            <person name="Helbig A.O."/>
            <person name="Slijper M."/>
            <person name="Krijgsveld J."/>
            <person name="Heck A.J."/>
            <person name="Mohammed S."/>
        </authorList>
    </citation>
    <scope>ACETYLATION [LARGE SCALE ANALYSIS] AT ALA-2</scope>
    <scope>CLEAVAGE OF INITIATOR METHIONINE [LARGE SCALE ANALYSIS]</scope>
    <scope>IDENTIFICATION BY MASS SPECTROMETRY [LARGE SCALE ANALYSIS]</scope>
</reference>
<reference key="26">
    <citation type="journal article" date="2009" name="Curr. Biol.">
        <title>UIF, a new mRNA export adaptor that works together with REF/ALY, requires FACT for recruitment to mRNA.</title>
        <authorList>
            <person name="Hautbergue G.M."/>
            <person name="Hung M.L."/>
            <person name="Walsh M.J."/>
            <person name="Snijders A.P."/>
            <person name="Chang C.T."/>
            <person name="Jones R."/>
            <person name="Ponting C.P."/>
            <person name="Dickman M.J."/>
            <person name="Wilson S.A."/>
        </authorList>
    </citation>
    <scope>INTERACTION WITH FYTTD1</scope>
</reference>
<reference key="27">
    <citation type="journal article" date="2009" name="Sci. Signal.">
        <title>Quantitative phosphoproteomic analysis of T cell receptor signaling reveals system-wide modulation of protein-protein interactions.</title>
        <authorList>
            <person name="Mayya V."/>
            <person name="Lundgren D.H."/>
            <person name="Hwang S.-I."/>
            <person name="Rezaul K."/>
            <person name="Wu L."/>
            <person name="Eng J.K."/>
            <person name="Rodionov V."/>
            <person name="Han D.K."/>
        </authorList>
    </citation>
    <scope>PHOSPHORYLATION [LARGE SCALE ANALYSIS] AT SER-444</scope>
    <scope>IDENTIFICATION BY MASS SPECTROMETRY [LARGE SCALE ANALYSIS]</scope>
    <source>
        <tissue>Leukemic T-cell</tissue>
    </source>
</reference>
<reference key="28">
    <citation type="journal article" date="2009" name="Science">
        <title>Lysine acetylation targets protein complexes and co-regulates major cellular functions.</title>
        <authorList>
            <person name="Choudhary C."/>
            <person name="Kumar C."/>
            <person name="Gnad F."/>
            <person name="Nielsen M.L."/>
            <person name="Rehman M."/>
            <person name="Walther T.C."/>
            <person name="Olsen J.V."/>
            <person name="Mann M."/>
        </authorList>
    </citation>
    <scope>ACETYLATION [LARGE SCALE ANALYSIS] AT LYS-233 AND LYS-413</scope>
    <scope>IDENTIFICATION BY MASS SPECTROMETRY [LARGE SCALE ANALYSIS]</scope>
</reference>
<reference key="29">
    <citation type="journal article" date="2010" name="Sci. Signal.">
        <title>Quantitative phosphoproteomics reveals widespread full phosphorylation site occupancy during mitosis.</title>
        <authorList>
            <person name="Olsen J.V."/>
            <person name="Vermeulen M."/>
            <person name="Santamaria A."/>
            <person name="Kumar C."/>
            <person name="Miller M.L."/>
            <person name="Jensen L.J."/>
            <person name="Gnad F."/>
            <person name="Cox J."/>
            <person name="Jensen T.S."/>
            <person name="Nigg E.A."/>
            <person name="Brunak S."/>
            <person name="Mann M."/>
        </authorList>
    </citation>
    <scope>PHOSPHORYLATION [LARGE SCALE ANALYSIS] AT THR-170 AND SER-444</scope>
    <scope>IDENTIFICATION BY MASS SPECTROMETRY [LARGE SCALE ANALYSIS]</scope>
    <source>
        <tissue>Cervix carcinoma</tissue>
    </source>
</reference>
<reference key="30">
    <citation type="journal article" date="2011" name="BMC Syst. Biol.">
        <title>Initial characterization of the human central proteome.</title>
        <authorList>
            <person name="Burkard T.R."/>
            <person name="Planyavsky M."/>
            <person name="Kaupe I."/>
            <person name="Breitwieser F.P."/>
            <person name="Buerckstuemmer T."/>
            <person name="Bennett K.L."/>
            <person name="Superti-Furga G."/>
            <person name="Colinge J."/>
        </authorList>
    </citation>
    <scope>IDENTIFICATION BY MASS SPECTROMETRY [LARGE SCALE ANALYSIS]</scope>
</reference>
<reference key="31">
    <citation type="journal article" date="2011" name="Sci. Signal.">
        <title>System-wide temporal characterization of the proteome and phosphoproteome of human embryonic stem cell differentiation.</title>
        <authorList>
            <person name="Rigbolt K.T."/>
            <person name="Prokhorova T.A."/>
            <person name="Akimov V."/>
            <person name="Henningsen J."/>
            <person name="Johansen P.T."/>
            <person name="Kratchmarova I."/>
            <person name="Kassem M."/>
            <person name="Mann M."/>
            <person name="Olsen J.V."/>
            <person name="Blagoev B."/>
        </authorList>
    </citation>
    <scope>PHOSPHORYLATION [LARGE SCALE ANALYSIS] AT SER-444; SER-657; SER-667; SER-668 AND SER-671</scope>
    <scope>IDENTIFICATION BY MASS SPECTROMETRY [LARGE SCALE ANALYSIS]</scope>
</reference>
<reference key="32">
    <citation type="journal article" date="2012" name="Mol. Cell. Proteomics">
        <title>Systematic analysis of protein pools, isoforms, and modifications affecting turnover and subcellular localization.</title>
        <authorList>
            <person name="Ahmad Y."/>
            <person name="Boisvert F.M."/>
            <person name="Lundberg E."/>
            <person name="Uhlen M."/>
            <person name="Lamond A.I."/>
        </authorList>
    </citation>
    <scope>SUBCELLULAR LOCATION [LARGE SCALE ANALYSIS]</scope>
</reference>
<reference key="33">
    <citation type="journal article" date="2012" name="Mol. Cell. Proteomics">
        <title>Comparative large-scale characterisation of plant vs. mammal proteins reveals similar and idiosyncratic N-alpha acetylation features.</title>
        <authorList>
            <person name="Bienvenut W.V."/>
            <person name="Sumpton D."/>
            <person name="Martinez A."/>
            <person name="Lilla S."/>
            <person name="Espagne C."/>
            <person name="Meinnel T."/>
            <person name="Giglione C."/>
        </authorList>
    </citation>
    <scope>ACETYLATION [LARGE SCALE ANALYSIS] AT ALA-2</scope>
    <scope>CLEAVAGE OF INITIATOR METHIONINE [LARGE SCALE ANALYSIS]</scope>
    <scope>IDENTIFICATION BY MASS SPECTROMETRY [LARGE SCALE ANALYSIS]</scope>
</reference>
<reference key="34">
    <citation type="journal article" date="2012" name="Proc. Natl. Acad. Sci. U.S.A.">
        <title>N-terminal acetylome analyses and functional insights of the N-terminal acetyltransferase NatB.</title>
        <authorList>
            <person name="Van Damme P."/>
            <person name="Lasa M."/>
            <person name="Polevoda B."/>
            <person name="Gazquez C."/>
            <person name="Elosegui-Artola A."/>
            <person name="Kim D.S."/>
            <person name="De Juan-Pardo E."/>
            <person name="Demeyer K."/>
            <person name="Hole K."/>
            <person name="Larrea E."/>
            <person name="Timmerman E."/>
            <person name="Prieto J."/>
            <person name="Arnesen T."/>
            <person name="Sherman F."/>
            <person name="Gevaert K."/>
            <person name="Aldabe R."/>
        </authorList>
    </citation>
    <scope>ACETYLATION [LARGE SCALE ANALYSIS] AT ALA-2</scope>
    <scope>CLEAVAGE OF INITIATOR METHIONINE [LARGE SCALE ANALYSIS]</scope>
    <scope>IDENTIFICATION BY MASS SPECTROMETRY [LARGE SCALE ANALYSIS]</scope>
</reference>
<reference key="35">
    <citation type="journal article" date="2013" name="J. Proteome Res.">
        <title>Toward a comprehensive characterization of a human cancer cell phosphoproteome.</title>
        <authorList>
            <person name="Zhou H."/>
            <person name="Di Palma S."/>
            <person name="Preisinger C."/>
            <person name="Peng M."/>
            <person name="Polat A.N."/>
            <person name="Heck A.J."/>
            <person name="Mohammed S."/>
        </authorList>
    </citation>
    <scope>PHOSPHORYLATION [LARGE SCALE ANALYSIS] AT SER-444; SER-659 AND SER-667</scope>
    <scope>IDENTIFICATION BY MASS SPECTROMETRY [LARGE SCALE ANALYSIS]</scope>
    <source>
        <tissue>Cervix carcinoma</tissue>
        <tissue>Erythroleukemia</tissue>
    </source>
</reference>
<reference key="36">
    <citation type="journal article" date="2014" name="J. Proteomics">
        <title>An enzyme assisted RP-RPLC approach for in-depth analysis of human liver phosphoproteome.</title>
        <authorList>
            <person name="Bian Y."/>
            <person name="Song C."/>
            <person name="Cheng K."/>
            <person name="Dong M."/>
            <person name="Wang F."/>
            <person name="Huang J."/>
            <person name="Sun D."/>
            <person name="Wang L."/>
            <person name="Ye M."/>
            <person name="Zou H."/>
        </authorList>
    </citation>
    <scope>PHOSPHORYLATION [LARGE SCALE ANALYSIS] AT SER-444 AND SER-471</scope>
    <scope>IDENTIFICATION BY MASS SPECTROMETRY [LARGE SCALE ANALYSIS]</scope>
    <source>
        <tissue>Liver</tissue>
    </source>
</reference>
<reference key="37">
    <citation type="journal article" date="2016" name="Mol. Cell">
        <title>The flexible ends of CENP-A nucleosome are required for mitotic fidelity.</title>
        <authorList>
            <person name="Roulland Y."/>
            <person name="Ouararhni K."/>
            <person name="Naidenov M."/>
            <person name="Ramos L."/>
            <person name="Shuaib M."/>
            <person name="Syed S.H."/>
            <person name="Lone I.N."/>
            <person name="Boopathi R."/>
            <person name="Fontaine E."/>
            <person name="Papai G."/>
            <person name="Tachiwana H."/>
            <person name="Gautier T."/>
            <person name="Skoufias D."/>
            <person name="Padmanabhan K."/>
            <person name="Bednar J."/>
            <person name="Kurumizaka H."/>
            <person name="Schultz P."/>
            <person name="Angelov D."/>
            <person name="Hamiche A."/>
            <person name="Dimitrov S."/>
        </authorList>
    </citation>
    <scope>SUBUNIT</scope>
</reference>
<reference key="38">
    <citation type="journal article" date="2017" name="MBio">
        <title>A Herpesviral Immediate Early Protein Promotes Transcription Elongation of Viral Transcripts.</title>
        <authorList>
            <person name="Fox H.L."/>
            <person name="Dembowski J.A."/>
            <person name="DeLuca N.A."/>
        </authorList>
    </citation>
    <scope>INTERACTION WITH HERPES SIMPLEX VIRUS 1 PROTEIN ICP22</scope>
</reference>
<reference key="39">
    <citation type="journal article" date="2017" name="Nat. Struct. Mol. Biol.">
        <title>Site-specific mapping of the human SUMO proteome reveals co-modification with phosphorylation.</title>
        <authorList>
            <person name="Hendriks I.A."/>
            <person name="Lyon D."/>
            <person name="Young C."/>
            <person name="Jensen L.J."/>
            <person name="Vertegaal A.C."/>
            <person name="Nielsen M.L."/>
        </authorList>
    </citation>
    <scope>SUMOYLATION [LARGE SCALE ANALYSIS] AT LYS-90; LYS-296 AND LYS-364</scope>
    <scope>IDENTIFICATION BY MASS SPECTROMETRY [LARGE SCALE ANALYSIS]</scope>
</reference>
<sequence length="709" mass="81075">MAETLEFNDVYQEVKGSMNDGRLRLSRQGIIFKNSKTGKVDNIQAGELTEGIWRRVALGHGLKLLTKNGHVYKYDGFRESEFEKLSDFFKTHYRLELMEKDLCVKGWNWGTVKFGGQLLSFDIGDQPVFEIPLSNVSQCTTGKNEVTLEFHQNDDAEVSLMEVRFYVPPTQEDGVDPVEAFAQNVLSKADVIQATGDAICIFRELQCLTPRGRYDIRIYPTFLHLHGKTFDYKIPYTTVLRLFLLPHKDQRQMFFVISLDPPIKQGQTRYHFLILLFSKDEDISLTLNMNEEEVEKRFEGRLTKNMSGSLYEMVSRVMKALVNRKITVPGNFQGHSGAQCITCSYKASSGLLYPLERGFIYVHKPPVHIRFDEISFVNFARGTTTTRSFDFEIETKQGTQYTFSSIEREEYGKLFDFVNAKKLNIKNRGLKEGMNPSYDEYADSDEDQHDAYLERMKEEGKIREENANDSSDDSGEETDESFNPGEEEEDVAEEFDSNASASSSSNEGDSDRDEKKRKQLKKAKMAKDRKSRKKPVEVKKGKDPNAPKRPMSAYMLWLNASREKIKSDHPGISITDLSKKAGEIWKGMSKEKKEEWDRKAEDARRDYEKAMKEYEGGRGESSKRDKSKKKKKVKVKMEKKSTPSRGSSSKSSSRQLSESFKSKEFVSSDESSSGENKSKKKRRRSEDSEEEELASTPPSSEDSASGSDE</sequence>
<organism>
    <name type="scientific">Homo sapiens</name>
    <name type="common">Human</name>
    <dbReference type="NCBI Taxonomy" id="9606"/>
    <lineage>
        <taxon>Eukaryota</taxon>
        <taxon>Metazoa</taxon>
        <taxon>Chordata</taxon>
        <taxon>Craniata</taxon>
        <taxon>Vertebrata</taxon>
        <taxon>Euteleostomi</taxon>
        <taxon>Mammalia</taxon>
        <taxon>Eutheria</taxon>
        <taxon>Euarchontoglires</taxon>
        <taxon>Primates</taxon>
        <taxon>Haplorrhini</taxon>
        <taxon>Catarrhini</taxon>
        <taxon>Hominidae</taxon>
        <taxon>Homo</taxon>
    </lineage>
</organism>